<name>EX7S_ALKEH</name>
<keyword id="KW-0963">Cytoplasm</keyword>
<keyword id="KW-0269">Exonuclease</keyword>
<keyword id="KW-0378">Hydrolase</keyword>
<keyword id="KW-0540">Nuclease</keyword>
<keyword id="KW-1185">Reference proteome</keyword>
<reference key="1">
    <citation type="submission" date="2006-08" db="EMBL/GenBank/DDBJ databases">
        <title>Complete sequence of Alkalilimnicola ehrilichei MLHE-1.</title>
        <authorList>
            <person name="Copeland A."/>
            <person name="Lucas S."/>
            <person name="Lapidus A."/>
            <person name="Barry K."/>
            <person name="Detter J.C."/>
            <person name="Glavina del Rio T."/>
            <person name="Hammon N."/>
            <person name="Israni S."/>
            <person name="Dalin E."/>
            <person name="Tice H."/>
            <person name="Pitluck S."/>
            <person name="Sims D."/>
            <person name="Brettin T."/>
            <person name="Bruce D."/>
            <person name="Han C."/>
            <person name="Tapia R."/>
            <person name="Gilna P."/>
            <person name="Schmutz J."/>
            <person name="Larimer F."/>
            <person name="Land M."/>
            <person name="Hauser L."/>
            <person name="Kyrpides N."/>
            <person name="Mikhailova N."/>
            <person name="Oremland R.S."/>
            <person name="Hoeft S.E."/>
            <person name="Switzer-Blum J."/>
            <person name="Kulp T."/>
            <person name="King G."/>
            <person name="Tabita R."/>
            <person name="Witte B."/>
            <person name="Santini J.M."/>
            <person name="Basu P."/>
            <person name="Hollibaugh J.T."/>
            <person name="Xie G."/>
            <person name="Stolz J.F."/>
            <person name="Richardson P."/>
        </authorList>
    </citation>
    <scope>NUCLEOTIDE SEQUENCE [LARGE SCALE GENOMIC DNA]</scope>
    <source>
        <strain>ATCC BAA-1101 / DSM 17681 / MLHE-1</strain>
    </source>
</reference>
<feature type="chain" id="PRO_0000303685" description="Exodeoxyribonuclease 7 small subunit">
    <location>
        <begin position="1"/>
        <end position="85"/>
    </location>
</feature>
<protein>
    <recommendedName>
        <fullName evidence="1">Exodeoxyribonuclease 7 small subunit</fullName>
        <ecNumber evidence="1">3.1.11.6</ecNumber>
    </recommendedName>
    <alternativeName>
        <fullName evidence="1">Exodeoxyribonuclease VII small subunit</fullName>
        <shortName evidence="1">Exonuclease VII small subunit</shortName>
    </alternativeName>
</protein>
<accession>Q0AA37</accession>
<sequence length="85" mass="9496">MDTPSSGSDSFDFEAALKELEGLVERMERGELSLEESLRQFERGVELTRACQKALQEAEQKVETLIGQGADAHEQAFEDPAHRDT</sequence>
<evidence type="ECO:0000255" key="1">
    <source>
        <dbReference type="HAMAP-Rule" id="MF_00337"/>
    </source>
</evidence>
<proteinExistence type="inferred from homology"/>
<gene>
    <name evidence="1" type="primary">xseB</name>
    <name type="ordered locus">Mlg_0946</name>
</gene>
<dbReference type="EC" id="3.1.11.6" evidence="1"/>
<dbReference type="EMBL" id="CP000453">
    <property type="protein sequence ID" value="ABI56300.1"/>
    <property type="molecule type" value="Genomic_DNA"/>
</dbReference>
<dbReference type="RefSeq" id="WP_011628695.1">
    <property type="nucleotide sequence ID" value="NC_008340.1"/>
</dbReference>
<dbReference type="SMR" id="Q0AA37"/>
<dbReference type="KEGG" id="aeh:Mlg_0946"/>
<dbReference type="eggNOG" id="COG1722">
    <property type="taxonomic scope" value="Bacteria"/>
</dbReference>
<dbReference type="HOGENOM" id="CLU_145918_3_3_6"/>
<dbReference type="OrthoDB" id="9801128at2"/>
<dbReference type="Proteomes" id="UP000001962">
    <property type="component" value="Chromosome"/>
</dbReference>
<dbReference type="GO" id="GO:0005829">
    <property type="term" value="C:cytosol"/>
    <property type="evidence" value="ECO:0007669"/>
    <property type="project" value="TreeGrafter"/>
</dbReference>
<dbReference type="GO" id="GO:0009318">
    <property type="term" value="C:exodeoxyribonuclease VII complex"/>
    <property type="evidence" value="ECO:0007669"/>
    <property type="project" value="InterPro"/>
</dbReference>
<dbReference type="GO" id="GO:0008855">
    <property type="term" value="F:exodeoxyribonuclease VII activity"/>
    <property type="evidence" value="ECO:0007669"/>
    <property type="project" value="UniProtKB-UniRule"/>
</dbReference>
<dbReference type="GO" id="GO:0006308">
    <property type="term" value="P:DNA catabolic process"/>
    <property type="evidence" value="ECO:0007669"/>
    <property type="project" value="UniProtKB-UniRule"/>
</dbReference>
<dbReference type="Gene3D" id="1.10.287.1040">
    <property type="entry name" value="Exonuclease VII, small subunit"/>
    <property type="match status" value="1"/>
</dbReference>
<dbReference type="HAMAP" id="MF_00337">
    <property type="entry name" value="Exonuc_7_S"/>
    <property type="match status" value="1"/>
</dbReference>
<dbReference type="InterPro" id="IPR003761">
    <property type="entry name" value="Exonuc_VII_S"/>
</dbReference>
<dbReference type="InterPro" id="IPR037004">
    <property type="entry name" value="Exonuc_VII_ssu_sf"/>
</dbReference>
<dbReference type="NCBIfam" id="NF002140">
    <property type="entry name" value="PRK00977.1-4"/>
    <property type="match status" value="1"/>
</dbReference>
<dbReference type="NCBIfam" id="TIGR01280">
    <property type="entry name" value="xseB"/>
    <property type="match status" value="1"/>
</dbReference>
<dbReference type="PANTHER" id="PTHR34137">
    <property type="entry name" value="EXODEOXYRIBONUCLEASE 7 SMALL SUBUNIT"/>
    <property type="match status" value="1"/>
</dbReference>
<dbReference type="PANTHER" id="PTHR34137:SF1">
    <property type="entry name" value="EXODEOXYRIBONUCLEASE 7 SMALL SUBUNIT"/>
    <property type="match status" value="1"/>
</dbReference>
<dbReference type="Pfam" id="PF02609">
    <property type="entry name" value="Exonuc_VII_S"/>
    <property type="match status" value="1"/>
</dbReference>
<dbReference type="PIRSF" id="PIRSF006488">
    <property type="entry name" value="Exonuc_VII_S"/>
    <property type="match status" value="1"/>
</dbReference>
<dbReference type="SUPFAM" id="SSF116842">
    <property type="entry name" value="XseB-like"/>
    <property type="match status" value="1"/>
</dbReference>
<organism>
    <name type="scientific">Alkalilimnicola ehrlichii (strain ATCC BAA-1101 / DSM 17681 / MLHE-1)</name>
    <dbReference type="NCBI Taxonomy" id="187272"/>
    <lineage>
        <taxon>Bacteria</taxon>
        <taxon>Pseudomonadati</taxon>
        <taxon>Pseudomonadota</taxon>
        <taxon>Gammaproteobacteria</taxon>
        <taxon>Chromatiales</taxon>
        <taxon>Ectothiorhodospiraceae</taxon>
        <taxon>Alkalilimnicola</taxon>
    </lineage>
</organism>
<comment type="function">
    <text evidence="1">Bidirectionally degrades single-stranded DNA into large acid-insoluble oligonucleotides, which are then degraded further into small acid-soluble oligonucleotides.</text>
</comment>
<comment type="catalytic activity">
    <reaction evidence="1">
        <text>Exonucleolytic cleavage in either 5'- to 3'- or 3'- to 5'-direction to yield nucleoside 5'-phosphates.</text>
        <dbReference type="EC" id="3.1.11.6"/>
    </reaction>
</comment>
<comment type="subunit">
    <text evidence="1">Heterooligomer composed of large and small subunits.</text>
</comment>
<comment type="subcellular location">
    <subcellularLocation>
        <location evidence="1">Cytoplasm</location>
    </subcellularLocation>
</comment>
<comment type="similarity">
    <text evidence="1">Belongs to the XseB family.</text>
</comment>